<comment type="function">
    <text evidence="2">Required during biogenesis of c-type cytochromes (cytochrome c6 and cytochrome f) at the step of heme attachment.</text>
</comment>
<comment type="subunit">
    <text evidence="1">May interact with ccs1.</text>
</comment>
<comment type="subcellular location">
    <subcellularLocation>
        <location evidence="2">Cellular thylakoid membrane</location>
        <topology evidence="2">Multi-pass membrane protein</topology>
    </subcellularLocation>
</comment>
<comment type="induction">
    <text evidence="4">By light.</text>
</comment>
<comment type="disruption phenotype">
    <text evidence="3 4">Cannot be insertionally inactivated suggesting it has an essential function (PubMed:10542282, PubMed:9187367).</text>
</comment>
<comment type="similarity">
    <text evidence="2">Belongs to the CcmF/CycK/Ccl1/NrfE/CcsA family.</text>
</comment>
<evidence type="ECO:0000250" key="1"/>
<evidence type="ECO:0000255" key="2">
    <source>
        <dbReference type="HAMAP-Rule" id="MF_01391"/>
    </source>
</evidence>
<evidence type="ECO:0000269" key="3">
    <source>
    </source>
</evidence>
<evidence type="ECO:0000269" key="4">
    <source>
    </source>
</evidence>
<evidence type="ECO:0000305" key="5"/>
<feature type="chain" id="PRO_0000353723" description="Cytochrome c biogenesis protein CcsA">
    <location>
        <begin position="1"/>
        <end position="334"/>
    </location>
</feature>
<feature type="transmembrane region" description="Helical" evidence="2">
    <location>
        <begin position="12"/>
        <end position="32"/>
    </location>
</feature>
<feature type="transmembrane region" description="Helical" evidence="2">
    <location>
        <begin position="35"/>
        <end position="55"/>
    </location>
</feature>
<feature type="transmembrane region" description="Helical" evidence="2">
    <location>
        <begin position="67"/>
        <end position="87"/>
    </location>
</feature>
<feature type="transmembrane region" description="Helical" evidence="2">
    <location>
        <begin position="96"/>
        <end position="116"/>
    </location>
</feature>
<feature type="transmembrane region" description="Helical" evidence="2">
    <location>
        <begin position="141"/>
        <end position="161"/>
    </location>
</feature>
<feature type="transmembrane region" description="Helical" evidence="2">
    <location>
        <begin position="242"/>
        <end position="262"/>
    </location>
</feature>
<feature type="transmembrane region" description="Helical" evidence="2">
    <location>
        <begin position="277"/>
        <end position="297"/>
    </location>
</feature>
<feature type="transmembrane region" description="Helical" evidence="2">
    <location>
        <begin position="303"/>
        <end position="323"/>
    </location>
</feature>
<feature type="sequence conflict" description="In Ref. 2; CAA96562." evidence="5" ref="2">
    <original>S</original>
    <variation>C</variation>
    <location>
        <position position="173"/>
    </location>
</feature>
<gene>
    <name evidence="2" type="primary">ccsA</name>
    <name type="ordered locus">sll1513</name>
</gene>
<protein>
    <recommendedName>
        <fullName evidence="2">Cytochrome c biogenesis protein CcsA</fullName>
    </recommendedName>
</protein>
<name>CCSA_SYNY3</name>
<sequence>MNLVSLESFLDNTAFLVLLLTMFAYWVAVVFPKPWLVQGASGAMAIANLTITALLGARWLEAGYFPISNLYESLFFLAWGITAVHFIAERMSQSRFVGAVTSPIALGIVAFAALTLPVDMQQSAPLVPALKSNWLMMHVSVMMVSYATLMVGSLLAIAFLFVTRGQAVELRGSSVGTGGFRQGLVKGNNLNPVGNLNPALEGVSGNSGNVAVLEKTTSTPAITLSPQRLTLADTLDNISYRIIGLGFPLLTIGIIAGAVWANEAWGSYWSWDPKETWALITWLVFAAYLHARITKGWQGRKPAILAASGFTVVWICYLGVNLLGKGLHSYGWFL</sequence>
<reference key="1">
    <citation type="submission" date="1994-10" db="EMBL/GenBank/DDBJ databases">
        <title>A photosensitive cyanobacterial mutant generated by insertional mutagenesis of orf334 homologous to liverwort chloroplast orf320.</title>
        <authorList>
            <person name="Lee K."/>
            <person name="Fukuzawa H."/>
            <person name="Ohyama K."/>
        </authorList>
    </citation>
    <scope>NUCLEOTIDE SEQUENCE [GENOMIC DNA]</scope>
</reference>
<reference key="2">
    <citation type="journal article" date="1997" name="FEBS Lett.">
        <title>A putative cytochrome c biogenesis gene in Synechocystis sp. PCC 6803.</title>
        <authorList>
            <person name="Huebschmann T."/>
            <person name="Wilde A."/>
            <person name="Elanskaya I."/>
            <person name="Shestakov S.V."/>
            <person name="Boerner T."/>
        </authorList>
    </citation>
    <scope>NUCLEOTIDE SEQUENCE [GENOMIC DNA]</scope>
    <scope>INDUCTION</scope>
    <scope>ATTEMPTED DISRUPTION PHENOTYPE</scope>
</reference>
<reference key="3">
    <citation type="journal article" date="1996" name="DNA Res.">
        <title>Sequence analysis of the genome of the unicellular cyanobacterium Synechocystis sp. strain PCC6803. II. Sequence determination of the entire genome and assignment of potential protein-coding regions.</title>
        <authorList>
            <person name="Kaneko T."/>
            <person name="Sato S."/>
            <person name="Kotani H."/>
            <person name="Tanaka A."/>
            <person name="Asamizu E."/>
            <person name="Nakamura Y."/>
            <person name="Miyajima N."/>
            <person name="Hirosawa M."/>
            <person name="Sugiura M."/>
            <person name="Sasamoto S."/>
            <person name="Kimura T."/>
            <person name="Hosouchi T."/>
            <person name="Matsuno A."/>
            <person name="Muraki A."/>
            <person name="Nakazaki N."/>
            <person name="Naruo K."/>
            <person name="Okumura S."/>
            <person name="Shimpo S."/>
            <person name="Takeuchi C."/>
            <person name="Wada T."/>
            <person name="Watanabe A."/>
            <person name="Yamada M."/>
            <person name="Yasuda M."/>
            <person name="Tabata S."/>
        </authorList>
    </citation>
    <scope>NUCLEOTIDE SEQUENCE [LARGE SCALE GENOMIC DNA]</scope>
    <source>
        <strain>ATCC 27184 / PCC 6803 / Kazusa</strain>
    </source>
</reference>
<reference key="4">
    <citation type="journal article" date="1999" name="J. Biol. Chem.">
        <title>Accumulation of pre-apocytochrome f in a Synechocystis sp. PCC 6803 mutant impaired in cytochrome c maturation.</title>
        <authorList>
            <person name="Tichy M."/>
            <person name="Vermaas W."/>
        </authorList>
    </citation>
    <scope>ATTEMPTED DISRUPTION PHENOTYPE</scope>
</reference>
<proteinExistence type="evidence at transcript level"/>
<accession>P72978</accession>
<accession>Q55316</accession>
<accession>Q79F46</accession>
<organism>
    <name type="scientific">Synechocystis sp. (strain ATCC 27184 / PCC 6803 / Kazusa)</name>
    <dbReference type="NCBI Taxonomy" id="1111708"/>
    <lineage>
        <taxon>Bacteria</taxon>
        <taxon>Bacillati</taxon>
        <taxon>Cyanobacteriota</taxon>
        <taxon>Cyanophyceae</taxon>
        <taxon>Synechococcales</taxon>
        <taxon>Merismopediaceae</taxon>
        <taxon>Synechocystis</taxon>
    </lineage>
</organism>
<dbReference type="EMBL" id="D38599">
    <property type="protein sequence ID" value="BAA22777.1"/>
    <property type="molecule type" value="Genomic_DNA"/>
</dbReference>
<dbReference type="EMBL" id="Z72480">
    <property type="protein sequence ID" value="CAA96562.1"/>
    <property type="molecule type" value="Genomic_DNA"/>
</dbReference>
<dbReference type="EMBL" id="BA000022">
    <property type="protein sequence ID" value="BAA16997.1"/>
    <property type="molecule type" value="Genomic_DNA"/>
</dbReference>
<dbReference type="PIR" id="S74957">
    <property type="entry name" value="S74957"/>
</dbReference>
<dbReference type="SMR" id="P72978"/>
<dbReference type="FunCoup" id="P72978">
    <property type="interactions" value="44"/>
</dbReference>
<dbReference type="IntAct" id="P72978">
    <property type="interactions" value="5"/>
</dbReference>
<dbReference type="STRING" id="1148.gene:10497858"/>
<dbReference type="PaxDb" id="1148-1652072"/>
<dbReference type="EnsemblBacteria" id="BAA16997">
    <property type="protein sequence ID" value="BAA16997"/>
    <property type="gene ID" value="BAA16997"/>
</dbReference>
<dbReference type="KEGG" id="syn:sll1513"/>
<dbReference type="eggNOG" id="COG0755">
    <property type="taxonomic scope" value="Bacteria"/>
</dbReference>
<dbReference type="InParanoid" id="P72978"/>
<dbReference type="PhylomeDB" id="P72978"/>
<dbReference type="Proteomes" id="UP000001425">
    <property type="component" value="Chromosome"/>
</dbReference>
<dbReference type="GO" id="GO:0031676">
    <property type="term" value="C:plasma membrane-derived thylakoid membrane"/>
    <property type="evidence" value="ECO:0007669"/>
    <property type="project" value="UniProtKB-SubCell"/>
</dbReference>
<dbReference type="GO" id="GO:0020037">
    <property type="term" value="F:heme binding"/>
    <property type="evidence" value="ECO:0007669"/>
    <property type="project" value="InterPro"/>
</dbReference>
<dbReference type="GO" id="GO:0017004">
    <property type="term" value="P:cytochrome complex assembly"/>
    <property type="evidence" value="ECO:0007669"/>
    <property type="project" value="UniProtKB-UniRule"/>
</dbReference>
<dbReference type="HAMAP" id="MF_01391">
    <property type="entry name" value="CytC_CcsA"/>
    <property type="match status" value="1"/>
</dbReference>
<dbReference type="InterPro" id="IPR002541">
    <property type="entry name" value="Cyt_c_assembly"/>
</dbReference>
<dbReference type="InterPro" id="IPR017562">
    <property type="entry name" value="Cyt_c_biogenesis_CcsA"/>
</dbReference>
<dbReference type="InterPro" id="IPR045062">
    <property type="entry name" value="Cyt_c_biogenesis_CcsA/CcmC"/>
</dbReference>
<dbReference type="NCBIfam" id="TIGR03144">
    <property type="entry name" value="cytochr_II_ccsB"/>
    <property type="match status" value="1"/>
</dbReference>
<dbReference type="PANTHER" id="PTHR30071:SF1">
    <property type="entry name" value="CYTOCHROME B_B6 PROTEIN-RELATED"/>
    <property type="match status" value="1"/>
</dbReference>
<dbReference type="PANTHER" id="PTHR30071">
    <property type="entry name" value="HEME EXPORTER PROTEIN C"/>
    <property type="match status" value="1"/>
</dbReference>
<dbReference type="Pfam" id="PF01578">
    <property type="entry name" value="Cytochrom_C_asm"/>
    <property type="match status" value="1"/>
</dbReference>
<keyword id="KW-0201">Cytochrome c-type biogenesis</keyword>
<keyword id="KW-0472">Membrane</keyword>
<keyword id="KW-1185">Reference proteome</keyword>
<keyword id="KW-0793">Thylakoid</keyword>
<keyword id="KW-0812">Transmembrane</keyword>
<keyword id="KW-1133">Transmembrane helix</keyword>